<evidence type="ECO:0000255" key="1">
    <source>
        <dbReference type="HAMAP-Rule" id="MF_00211"/>
    </source>
</evidence>
<evidence type="ECO:0000305" key="2"/>
<dbReference type="EC" id="2.4.2.18" evidence="1"/>
<dbReference type="EMBL" id="BA000037">
    <property type="protein sequence ID" value="BAC93983.1"/>
    <property type="status" value="ALT_INIT"/>
    <property type="molecule type" value="Genomic_DNA"/>
</dbReference>
<dbReference type="RefSeq" id="WP_011149927.1">
    <property type="nucleotide sequence ID" value="NC_005139.1"/>
</dbReference>
<dbReference type="SMR" id="Q7MM54"/>
<dbReference type="STRING" id="672.VV93_v1c11370"/>
<dbReference type="KEGG" id="vvy:VV1219"/>
<dbReference type="PATRIC" id="fig|196600.6.peg.1212"/>
<dbReference type="eggNOG" id="COG0547">
    <property type="taxonomic scope" value="Bacteria"/>
</dbReference>
<dbReference type="HOGENOM" id="CLU_034315_2_1_6"/>
<dbReference type="UniPathway" id="UPA00035">
    <property type="reaction ID" value="UER00041"/>
</dbReference>
<dbReference type="Proteomes" id="UP000002675">
    <property type="component" value="Chromosome I"/>
</dbReference>
<dbReference type="GO" id="GO:0005829">
    <property type="term" value="C:cytosol"/>
    <property type="evidence" value="ECO:0007669"/>
    <property type="project" value="TreeGrafter"/>
</dbReference>
<dbReference type="GO" id="GO:0004048">
    <property type="term" value="F:anthranilate phosphoribosyltransferase activity"/>
    <property type="evidence" value="ECO:0007669"/>
    <property type="project" value="UniProtKB-UniRule"/>
</dbReference>
<dbReference type="GO" id="GO:0000287">
    <property type="term" value="F:magnesium ion binding"/>
    <property type="evidence" value="ECO:0007669"/>
    <property type="project" value="UniProtKB-UniRule"/>
</dbReference>
<dbReference type="GO" id="GO:0000162">
    <property type="term" value="P:L-tryptophan biosynthetic process"/>
    <property type="evidence" value="ECO:0007669"/>
    <property type="project" value="UniProtKB-UniRule"/>
</dbReference>
<dbReference type="FunFam" id="1.20.970.10:FF:000003">
    <property type="entry name" value="Anthranilate phosphoribosyltransferase"/>
    <property type="match status" value="1"/>
</dbReference>
<dbReference type="FunFam" id="3.40.1030.10:FF:000002">
    <property type="entry name" value="Anthranilate phosphoribosyltransferase"/>
    <property type="match status" value="1"/>
</dbReference>
<dbReference type="Gene3D" id="3.40.1030.10">
    <property type="entry name" value="Nucleoside phosphorylase/phosphoribosyltransferase catalytic domain"/>
    <property type="match status" value="1"/>
</dbReference>
<dbReference type="Gene3D" id="1.20.970.10">
    <property type="entry name" value="Transferase, Pyrimidine Nucleoside Phosphorylase, Chain C"/>
    <property type="match status" value="1"/>
</dbReference>
<dbReference type="HAMAP" id="MF_00211">
    <property type="entry name" value="TrpD"/>
    <property type="match status" value="1"/>
</dbReference>
<dbReference type="InterPro" id="IPR005940">
    <property type="entry name" value="Anthranilate_Pribosyl_Tfrase"/>
</dbReference>
<dbReference type="InterPro" id="IPR000312">
    <property type="entry name" value="Glycosyl_Trfase_fam3"/>
</dbReference>
<dbReference type="InterPro" id="IPR017459">
    <property type="entry name" value="Glycosyl_Trfase_fam3_N_dom"/>
</dbReference>
<dbReference type="InterPro" id="IPR036320">
    <property type="entry name" value="Glycosyl_Trfase_fam3_N_dom_sf"/>
</dbReference>
<dbReference type="InterPro" id="IPR035902">
    <property type="entry name" value="Nuc_phospho_transferase"/>
</dbReference>
<dbReference type="NCBIfam" id="TIGR01245">
    <property type="entry name" value="trpD"/>
    <property type="match status" value="1"/>
</dbReference>
<dbReference type="PANTHER" id="PTHR43285">
    <property type="entry name" value="ANTHRANILATE PHOSPHORIBOSYLTRANSFERASE"/>
    <property type="match status" value="1"/>
</dbReference>
<dbReference type="PANTHER" id="PTHR43285:SF2">
    <property type="entry name" value="ANTHRANILATE PHOSPHORIBOSYLTRANSFERASE"/>
    <property type="match status" value="1"/>
</dbReference>
<dbReference type="Pfam" id="PF02885">
    <property type="entry name" value="Glycos_trans_3N"/>
    <property type="match status" value="1"/>
</dbReference>
<dbReference type="Pfam" id="PF00591">
    <property type="entry name" value="Glycos_transf_3"/>
    <property type="match status" value="1"/>
</dbReference>
<dbReference type="SUPFAM" id="SSF52418">
    <property type="entry name" value="Nucleoside phosphorylase/phosphoribosyltransferase catalytic domain"/>
    <property type="match status" value="1"/>
</dbReference>
<dbReference type="SUPFAM" id="SSF47648">
    <property type="entry name" value="Nucleoside phosphorylase/phosphoribosyltransferase N-terminal domain"/>
    <property type="match status" value="1"/>
</dbReference>
<comment type="function">
    <text evidence="1">Catalyzes the transfer of the phosphoribosyl group of 5-phosphorylribose-1-pyrophosphate (PRPP) to anthranilate to yield N-(5'-phosphoribosyl)-anthranilate (PRA).</text>
</comment>
<comment type="catalytic activity">
    <reaction evidence="1">
        <text>N-(5-phospho-beta-D-ribosyl)anthranilate + diphosphate = 5-phospho-alpha-D-ribose 1-diphosphate + anthranilate</text>
        <dbReference type="Rhea" id="RHEA:11768"/>
        <dbReference type="ChEBI" id="CHEBI:16567"/>
        <dbReference type="ChEBI" id="CHEBI:18277"/>
        <dbReference type="ChEBI" id="CHEBI:33019"/>
        <dbReference type="ChEBI" id="CHEBI:58017"/>
        <dbReference type="EC" id="2.4.2.18"/>
    </reaction>
</comment>
<comment type="cofactor">
    <cofactor evidence="1">
        <name>Mg(2+)</name>
        <dbReference type="ChEBI" id="CHEBI:18420"/>
    </cofactor>
    <text evidence="1">Binds 2 magnesium ions per monomer.</text>
</comment>
<comment type="pathway">
    <text evidence="1">Amino-acid biosynthesis; L-tryptophan biosynthesis; L-tryptophan from chorismate: step 2/5.</text>
</comment>
<comment type="subunit">
    <text evidence="1">Homodimer.</text>
</comment>
<comment type="similarity">
    <text evidence="1">Belongs to the anthranilate phosphoribosyltransferase family.</text>
</comment>
<comment type="sequence caution" evidence="2">
    <conflict type="erroneous initiation">
        <sequence resource="EMBL-CDS" id="BAC93983"/>
    </conflict>
    <text>Extended N-terminus.</text>
</comment>
<reference key="1">
    <citation type="journal article" date="2003" name="Genome Res.">
        <title>Comparative genome analysis of Vibrio vulnificus, a marine pathogen.</title>
        <authorList>
            <person name="Chen C.-Y."/>
            <person name="Wu K.-M."/>
            <person name="Chang Y.-C."/>
            <person name="Chang C.-H."/>
            <person name="Tsai H.-C."/>
            <person name="Liao T.-L."/>
            <person name="Liu Y.-M."/>
            <person name="Chen H.-J."/>
            <person name="Shen A.B.-T."/>
            <person name="Li J.-C."/>
            <person name="Su T.-L."/>
            <person name="Shao C.-P."/>
            <person name="Lee C.-T."/>
            <person name="Hor L.-I."/>
            <person name="Tsai S.-F."/>
        </authorList>
    </citation>
    <scope>NUCLEOTIDE SEQUENCE [LARGE SCALE GENOMIC DNA]</scope>
    <source>
        <strain>YJ016</strain>
    </source>
</reference>
<keyword id="KW-0028">Amino-acid biosynthesis</keyword>
<keyword id="KW-0057">Aromatic amino acid biosynthesis</keyword>
<keyword id="KW-0328">Glycosyltransferase</keyword>
<keyword id="KW-0460">Magnesium</keyword>
<keyword id="KW-0479">Metal-binding</keyword>
<keyword id="KW-0808">Transferase</keyword>
<keyword id="KW-0822">Tryptophan biosynthesis</keyword>
<proteinExistence type="inferred from homology"/>
<feature type="chain" id="PRO_0000154501" description="Anthranilate phosphoribosyltransferase">
    <location>
        <begin position="1"/>
        <end position="332"/>
    </location>
</feature>
<feature type="binding site" evidence="1">
    <location>
        <position position="79"/>
    </location>
    <ligand>
        <name>5-phospho-alpha-D-ribose 1-diphosphate</name>
        <dbReference type="ChEBI" id="CHEBI:58017"/>
    </ligand>
</feature>
<feature type="binding site" evidence="1">
    <location>
        <position position="79"/>
    </location>
    <ligand>
        <name>anthranilate</name>
        <dbReference type="ChEBI" id="CHEBI:16567"/>
        <label>1</label>
    </ligand>
</feature>
<feature type="binding site" evidence="1">
    <location>
        <begin position="82"/>
        <end position="83"/>
    </location>
    <ligand>
        <name>5-phospho-alpha-D-ribose 1-diphosphate</name>
        <dbReference type="ChEBI" id="CHEBI:58017"/>
    </ligand>
</feature>
<feature type="binding site" evidence="1">
    <location>
        <position position="87"/>
    </location>
    <ligand>
        <name>5-phospho-alpha-D-ribose 1-diphosphate</name>
        <dbReference type="ChEBI" id="CHEBI:58017"/>
    </ligand>
</feature>
<feature type="binding site" evidence="1">
    <location>
        <begin position="89"/>
        <end position="92"/>
    </location>
    <ligand>
        <name>5-phospho-alpha-D-ribose 1-diphosphate</name>
        <dbReference type="ChEBI" id="CHEBI:58017"/>
    </ligand>
</feature>
<feature type="binding site" evidence="1">
    <location>
        <position position="91"/>
    </location>
    <ligand>
        <name>Mg(2+)</name>
        <dbReference type="ChEBI" id="CHEBI:18420"/>
        <label>1</label>
    </ligand>
</feature>
<feature type="binding site" evidence="1">
    <location>
        <begin position="107"/>
        <end position="115"/>
    </location>
    <ligand>
        <name>5-phospho-alpha-D-ribose 1-diphosphate</name>
        <dbReference type="ChEBI" id="CHEBI:58017"/>
    </ligand>
</feature>
<feature type="binding site" evidence="1">
    <location>
        <position position="110"/>
    </location>
    <ligand>
        <name>anthranilate</name>
        <dbReference type="ChEBI" id="CHEBI:16567"/>
        <label>1</label>
    </ligand>
</feature>
<feature type="binding site" evidence="1">
    <location>
        <position position="119"/>
    </location>
    <ligand>
        <name>5-phospho-alpha-D-ribose 1-diphosphate</name>
        <dbReference type="ChEBI" id="CHEBI:58017"/>
    </ligand>
</feature>
<feature type="binding site" evidence="1">
    <location>
        <position position="165"/>
    </location>
    <ligand>
        <name>anthranilate</name>
        <dbReference type="ChEBI" id="CHEBI:16567"/>
        <label>2</label>
    </ligand>
</feature>
<feature type="binding site" evidence="1">
    <location>
        <position position="223"/>
    </location>
    <ligand>
        <name>Mg(2+)</name>
        <dbReference type="ChEBI" id="CHEBI:18420"/>
        <label>2</label>
    </ligand>
</feature>
<feature type="binding site" evidence="1">
    <location>
        <position position="224"/>
    </location>
    <ligand>
        <name>Mg(2+)</name>
        <dbReference type="ChEBI" id="CHEBI:18420"/>
        <label>1</label>
    </ligand>
</feature>
<feature type="binding site" evidence="1">
    <location>
        <position position="224"/>
    </location>
    <ligand>
        <name>Mg(2+)</name>
        <dbReference type="ChEBI" id="CHEBI:18420"/>
        <label>2</label>
    </ligand>
</feature>
<name>TRPD_VIBVY</name>
<sequence length="332" mass="35434">MEAIINKLYLQESLTEQESQQLFDTIIRGELDPILMASALTALKIKGETPDEIAGAAKALLANAQPFPRPDYDFADIVGTGGDGHNTINISTTAAFVAAACGLKVAKHGNRSVSSKSGSSDLLDSFGINLAMSAEDTRSAVDSIGVAFLFAPQYHSGVKHAMPVRQTMKTRTIFNILGPLINPARPNIELMGVYSQELVRPIAETMLKMGMKRAAVVHGSGLDEVAIHGDTLVAEIKDGVIHEYTLTPADFGVNTHPLEAIKGGDPEENKAIITHLLTGKGTEAQLSAVAVNVALLMRLFGHEDLKANTQQAIDVMNSGKAYQLVEKLAQHA</sequence>
<protein>
    <recommendedName>
        <fullName evidence="1">Anthranilate phosphoribosyltransferase</fullName>
        <ecNumber evidence="1">2.4.2.18</ecNumber>
    </recommendedName>
</protein>
<accession>Q7MM54</accession>
<gene>
    <name evidence="1" type="primary">trpD</name>
    <name type="ordered locus">VV1219</name>
</gene>
<organism>
    <name type="scientific">Vibrio vulnificus (strain YJ016)</name>
    <dbReference type="NCBI Taxonomy" id="196600"/>
    <lineage>
        <taxon>Bacteria</taxon>
        <taxon>Pseudomonadati</taxon>
        <taxon>Pseudomonadota</taxon>
        <taxon>Gammaproteobacteria</taxon>
        <taxon>Vibrionales</taxon>
        <taxon>Vibrionaceae</taxon>
        <taxon>Vibrio</taxon>
    </lineage>
</organism>